<comment type="function">
    <text evidence="1">E1 component of the 2-oxoglutarate dehydrogenase (OGDH) complex which catalyzes the decarboxylation of 2-oxoglutarate, the first step in the conversion of 2-oxoglutarate to succinyl-CoA and CO(2).</text>
</comment>
<comment type="catalytic activity">
    <reaction evidence="1">
        <text>N(6)-[(R)-lipoyl]-L-lysyl-[protein] + 2-oxoglutarate + H(+) = N(6)-[(R)-S(8)-succinyldihydrolipoyl]-L-lysyl-[protein] + CO2</text>
        <dbReference type="Rhea" id="RHEA:12188"/>
        <dbReference type="Rhea" id="RHEA-COMP:10474"/>
        <dbReference type="Rhea" id="RHEA-COMP:20092"/>
        <dbReference type="ChEBI" id="CHEBI:15378"/>
        <dbReference type="ChEBI" id="CHEBI:16526"/>
        <dbReference type="ChEBI" id="CHEBI:16810"/>
        <dbReference type="ChEBI" id="CHEBI:83099"/>
        <dbReference type="ChEBI" id="CHEBI:83120"/>
        <dbReference type="EC" id="1.2.4.2"/>
    </reaction>
</comment>
<comment type="cofactor">
    <cofactor evidence="1">
        <name>thiamine diphosphate</name>
        <dbReference type="ChEBI" id="CHEBI:58937"/>
    </cofactor>
</comment>
<comment type="subunit">
    <text evidence="1">Homodimer. Part of the 2-oxoglutarate dehydrogenase (OGDH) complex composed of E1 (2-oxoglutarate dehydrogenase), E2 (dihydrolipoamide succinyltransferase) and E3 (dihydrolipoamide dehydrogenase); the complex contains multiple copies of the three enzymatic components (E1, E2 and E3).</text>
</comment>
<comment type="similarity">
    <text evidence="1">Belongs to the alpha-ketoglutarate dehydrogenase family.</text>
</comment>
<reference key="1">
    <citation type="journal article" date="2008" name="Chem. Biol. Interact.">
        <title>Extending the Bacillus cereus group genomics to putative food-borne pathogens of different toxicity.</title>
        <authorList>
            <person name="Lapidus A."/>
            <person name="Goltsman E."/>
            <person name="Auger S."/>
            <person name="Galleron N."/>
            <person name="Segurens B."/>
            <person name="Dossat C."/>
            <person name="Land M.L."/>
            <person name="Broussolle V."/>
            <person name="Brillard J."/>
            <person name="Guinebretiere M.-H."/>
            <person name="Sanchis V."/>
            <person name="Nguen-the C."/>
            <person name="Lereclus D."/>
            <person name="Richardson P."/>
            <person name="Wincker P."/>
            <person name="Weissenbach J."/>
            <person name="Ehrlich S.D."/>
            <person name="Sorokin A."/>
        </authorList>
    </citation>
    <scope>NUCLEOTIDE SEQUENCE [LARGE SCALE GENOMIC DNA]</scope>
    <source>
        <strain>KBAB4</strain>
    </source>
</reference>
<accession>A9VJX9</accession>
<keyword id="KW-0324">Glycolysis</keyword>
<keyword id="KW-0560">Oxidoreductase</keyword>
<keyword id="KW-0786">Thiamine pyrophosphate</keyword>
<gene>
    <name evidence="1" type="primary">odhA</name>
    <name type="ordered locus">BcerKBAB4_1166</name>
</gene>
<feature type="chain" id="PRO_1000137970" description="2-oxoglutarate dehydrogenase E1 component">
    <location>
        <begin position="1"/>
        <end position="955"/>
    </location>
</feature>
<evidence type="ECO:0000255" key="1">
    <source>
        <dbReference type="HAMAP-Rule" id="MF_01169"/>
    </source>
</evidence>
<name>ODO1_BACMK</name>
<proteinExistence type="inferred from homology"/>
<organism>
    <name type="scientific">Bacillus mycoides (strain KBAB4)</name>
    <name type="common">Bacillus weihenstephanensis</name>
    <dbReference type="NCBI Taxonomy" id="315730"/>
    <lineage>
        <taxon>Bacteria</taxon>
        <taxon>Bacillati</taxon>
        <taxon>Bacillota</taxon>
        <taxon>Bacilli</taxon>
        <taxon>Bacillales</taxon>
        <taxon>Bacillaceae</taxon>
        <taxon>Bacillus</taxon>
        <taxon>Bacillus cereus group</taxon>
    </lineage>
</organism>
<dbReference type="EC" id="1.2.4.2" evidence="1"/>
<dbReference type="EMBL" id="CP000903">
    <property type="protein sequence ID" value="ABY42415.1"/>
    <property type="molecule type" value="Genomic_DNA"/>
</dbReference>
<dbReference type="RefSeq" id="WP_002140892.1">
    <property type="nucleotide sequence ID" value="NC_010184.1"/>
</dbReference>
<dbReference type="SMR" id="A9VJX9"/>
<dbReference type="KEGG" id="bwe:BcerKBAB4_1166"/>
<dbReference type="eggNOG" id="COG0567">
    <property type="taxonomic scope" value="Bacteria"/>
</dbReference>
<dbReference type="HOGENOM" id="CLU_004709_1_0_9"/>
<dbReference type="Proteomes" id="UP000002154">
    <property type="component" value="Chromosome"/>
</dbReference>
<dbReference type="GO" id="GO:0005829">
    <property type="term" value="C:cytosol"/>
    <property type="evidence" value="ECO:0007669"/>
    <property type="project" value="TreeGrafter"/>
</dbReference>
<dbReference type="GO" id="GO:0045252">
    <property type="term" value="C:oxoglutarate dehydrogenase complex"/>
    <property type="evidence" value="ECO:0007669"/>
    <property type="project" value="TreeGrafter"/>
</dbReference>
<dbReference type="GO" id="GO:0004591">
    <property type="term" value="F:oxoglutarate dehydrogenase (succinyl-transferring) activity"/>
    <property type="evidence" value="ECO:0007669"/>
    <property type="project" value="UniProtKB-UniRule"/>
</dbReference>
<dbReference type="GO" id="GO:0030976">
    <property type="term" value="F:thiamine pyrophosphate binding"/>
    <property type="evidence" value="ECO:0007669"/>
    <property type="project" value="UniProtKB-UniRule"/>
</dbReference>
<dbReference type="GO" id="GO:0006096">
    <property type="term" value="P:glycolytic process"/>
    <property type="evidence" value="ECO:0007669"/>
    <property type="project" value="UniProtKB-UniRule"/>
</dbReference>
<dbReference type="GO" id="GO:0006099">
    <property type="term" value="P:tricarboxylic acid cycle"/>
    <property type="evidence" value="ECO:0007669"/>
    <property type="project" value="TreeGrafter"/>
</dbReference>
<dbReference type="CDD" id="cd02016">
    <property type="entry name" value="TPP_E1_OGDC_like"/>
    <property type="match status" value="1"/>
</dbReference>
<dbReference type="FunFam" id="3.40.50.11610:FF:000002">
    <property type="entry name" value="2-oxoglutarate dehydrogenase E1 component"/>
    <property type="match status" value="1"/>
</dbReference>
<dbReference type="FunFam" id="3.40.50.970:FF:000036">
    <property type="entry name" value="2-oxoglutarate dehydrogenase E1 component"/>
    <property type="match status" value="1"/>
</dbReference>
<dbReference type="Gene3D" id="3.40.50.12470">
    <property type="match status" value="1"/>
</dbReference>
<dbReference type="Gene3D" id="3.40.50.970">
    <property type="match status" value="1"/>
</dbReference>
<dbReference type="Gene3D" id="3.40.50.11610">
    <property type="entry name" value="Multifunctional 2-oxoglutarate metabolism enzyme, C-terminal domain"/>
    <property type="match status" value="1"/>
</dbReference>
<dbReference type="HAMAP" id="MF_01169">
    <property type="entry name" value="SucA_OdhA"/>
    <property type="match status" value="1"/>
</dbReference>
<dbReference type="InterPro" id="IPR011603">
    <property type="entry name" value="2oxoglutarate_DH_E1"/>
</dbReference>
<dbReference type="InterPro" id="IPR023784">
    <property type="entry name" value="2oxoglutarate_DH_E1_bac"/>
</dbReference>
<dbReference type="InterPro" id="IPR001017">
    <property type="entry name" value="DH_E1"/>
</dbReference>
<dbReference type="InterPro" id="IPR042179">
    <property type="entry name" value="KGD_C_sf"/>
</dbReference>
<dbReference type="InterPro" id="IPR031717">
    <property type="entry name" value="ODO-1/KGD_C"/>
</dbReference>
<dbReference type="InterPro" id="IPR029061">
    <property type="entry name" value="THDP-binding"/>
</dbReference>
<dbReference type="InterPro" id="IPR005475">
    <property type="entry name" value="Transketolase-like_Pyr-bd"/>
</dbReference>
<dbReference type="NCBIfam" id="TIGR00239">
    <property type="entry name" value="2oxo_dh_E1"/>
    <property type="match status" value="1"/>
</dbReference>
<dbReference type="NCBIfam" id="NF006914">
    <property type="entry name" value="PRK09404.1"/>
    <property type="match status" value="1"/>
</dbReference>
<dbReference type="NCBIfam" id="NF008907">
    <property type="entry name" value="PRK12270.1"/>
    <property type="match status" value="1"/>
</dbReference>
<dbReference type="PANTHER" id="PTHR23152:SF4">
    <property type="entry name" value="2-OXOADIPATE DEHYDROGENASE COMPLEX COMPONENT E1"/>
    <property type="match status" value="1"/>
</dbReference>
<dbReference type="PANTHER" id="PTHR23152">
    <property type="entry name" value="2-OXOGLUTARATE DEHYDROGENASE"/>
    <property type="match status" value="1"/>
</dbReference>
<dbReference type="Pfam" id="PF00676">
    <property type="entry name" value="E1_dh"/>
    <property type="match status" value="1"/>
</dbReference>
<dbReference type="Pfam" id="PF16870">
    <property type="entry name" value="OxoGdeHyase_C"/>
    <property type="match status" value="1"/>
</dbReference>
<dbReference type="Pfam" id="PF02779">
    <property type="entry name" value="Transket_pyr"/>
    <property type="match status" value="1"/>
</dbReference>
<dbReference type="PIRSF" id="PIRSF000157">
    <property type="entry name" value="Oxoglu_dh_E1"/>
    <property type="match status" value="1"/>
</dbReference>
<dbReference type="SMART" id="SM00861">
    <property type="entry name" value="Transket_pyr"/>
    <property type="match status" value="1"/>
</dbReference>
<dbReference type="SUPFAM" id="SSF52518">
    <property type="entry name" value="Thiamin diphosphate-binding fold (THDP-binding)"/>
    <property type="match status" value="2"/>
</dbReference>
<protein>
    <recommendedName>
        <fullName evidence="1">2-oxoglutarate dehydrogenase E1 component</fullName>
        <ecNumber evidence="1">1.2.4.2</ecNumber>
    </recommendedName>
    <alternativeName>
        <fullName evidence="1">Alpha-ketoglutarate dehydrogenase</fullName>
    </alternativeName>
</protein>
<sequence>MTRKNTTTNPWAKFHGPNLGYVIEQYDLYVTGAGSVDPELQELFEIFGAPSFQDDVVTGDNTATHFSPQNTGNIEKILKVVQLVEQIRSFGHTLAHINPMEDAANGQSLIEKTMNELSDADLKAIPAKTVWQDAPEGIHTALDVIHRLKDVYTKSLAYEFSHIQDSEERAWLHQMVESNSLRQPLSNKKRTALLKRLTAVEGFEQFLHKTFVGQKRFSIEGVDMLVPVLDEIVSEGAKGGVEDVMIGMAHRGRLSVLAHVLEKPYSHMFAEFKHAKIEGAVANAGWTGDVKYHLGREQVVGNEEVSTRVTLANNPSHLEFVNPVVEGFARAAQENRKKSGLPEQDTTKSFVILVHGDAAFPGQGVVSETLNLSRLNAYQTGGTIHVIANNAVGFTTDSYDSRSTKYSSDLAKGFDIPIVHVNADDPEACLAAANLAIQYRTLFKKDFLIDLIGYRRYGHNEMDDPAVTQPQVYKKIKNHPTVRAIYADQLQSAGVLNADEVETITQFMQEELKAEYAQVPPADTSAATIHVKVPEVVAKGIQPIDTGVSIESLRAINEGLLSWPEGFNVYPKVKKILERRKDALEENGKIEWALAESLAFASILQEGTPIRLTGQDSQRGTFAHRHIVLHDTDTNETYSPLHRLPNINASFSVHNSPLSEAAVVGYEYGYNVFAPETLVMWEAQYGDFSNTAQALFDQYVSAGRAKWGQKSGLVLLLPHGYEGQGPEHSSARPERFLQLAAENNWTVANLTSAAQYFHILRRQASILGTEAVRPLVLMTPKSLLRHPLTLSTASQLSEGRFQPALEQENLGAKPNKVKRLVLSTGKMAIDLAAEIESGKHEYSLDEVHMVRVEQLYPFPAEKVQSIIKRFKNLEEIIWVQEEPRNMGAWHYMAPILFELAGDKVKTGYIGRPDRSSPSGGDPFAHKAEQELIVAHALDVKYNFRQDKQEIEVFSN</sequence>